<accession>Q2FNT7</accession>
<organism>
    <name type="scientific">Methanospirillum hungatei JF-1 (strain ATCC 27890 / DSM 864 / NBRC 100397 / JF-1)</name>
    <dbReference type="NCBI Taxonomy" id="323259"/>
    <lineage>
        <taxon>Archaea</taxon>
        <taxon>Methanobacteriati</taxon>
        <taxon>Methanobacteriota</taxon>
        <taxon>Stenosarchaea group</taxon>
        <taxon>Methanomicrobia</taxon>
        <taxon>Methanomicrobiales</taxon>
        <taxon>Methanospirillaceae</taxon>
        <taxon>Methanospirillum</taxon>
    </lineage>
</organism>
<sequence length="299" mass="32507">MTPTLPDIKPIPIKERSSVVFLGRGELDVIDGAFVLVDTNGIRMQIPVGGLASLMLEPGSRVSHAAVSLASKVGCLLVFVGEGGVRLYSVGHPGGARSDRLLYQARLALDEVLRLKVVKKMFSLRFGEDFSDAYSVEQLRGLEGVRVREGYRKIARDTGVIWNGRRYDPHSWGSADLPNRCLSAATASLYGICEAAVLAAGYSPSIGFLHTGKPLSFVYDIADLFKFETVVPAAFKTAALNPREPEREVRYACRDLFRETQLLKRIIPTIEEVLTAGGISAPAPPDWVVPPAIPVDEEG</sequence>
<comment type="function">
    <text evidence="1">CRISPR (clustered regularly interspaced short palindromic repeat), is an adaptive immune system that provides protection against mobile genetic elements (viruses, transposable elements and conjugative plasmids). CRISPR clusters contain spacers, sequences complementary to antecedent mobile elements, and target invading nucleic acids. CRISPR clusters are transcribed and processed into CRISPR RNA (crRNA). Acts as a dsDNA endonuclease. Involved in the integration of spacer DNA into the CRISPR cassette.</text>
</comment>
<comment type="cofactor">
    <cofactor evidence="1">
        <name>Mg(2+)</name>
        <dbReference type="ChEBI" id="CHEBI:18420"/>
    </cofactor>
    <cofactor evidence="1">
        <name>Mn(2+)</name>
        <dbReference type="ChEBI" id="CHEBI:29035"/>
    </cofactor>
</comment>
<comment type="subunit">
    <text evidence="1">Homodimer, forms a heterotetramer with a Cas2 homodimer.</text>
</comment>
<comment type="similarity">
    <text evidence="1">Belongs to the CRISPR-associated endonuclease Cas1 family.</text>
</comment>
<evidence type="ECO:0000255" key="1">
    <source>
        <dbReference type="HAMAP-Rule" id="MF_01470"/>
    </source>
</evidence>
<feature type="chain" id="PRO_0000417103" description="CRISPR-associated endonuclease Cas1 3">
    <location>
        <begin position="1"/>
        <end position="299"/>
    </location>
</feature>
<feature type="binding site" evidence="1">
    <location>
        <position position="143"/>
    </location>
    <ligand>
        <name>Mn(2+)</name>
        <dbReference type="ChEBI" id="CHEBI:29035"/>
    </ligand>
</feature>
<feature type="binding site" evidence="1">
    <location>
        <position position="210"/>
    </location>
    <ligand>
        <name>Mn(2+)</name>
        <dbReference type="ChEBI" id="CHEBI:29035"/>
    </ligand>
</feature>
<feature type="binding site" evidence="1">
    <location>
        <position position="223"/>
    </location>
    <ligand>
        <name>Mn(2+)</name>
        <dbReference type="ChEBI" id="CHEBI:29035"/>
    </ligand>
</feature>
<proteinExistence type="inferred from homology"/>
<protein>
    <recommendedName>
        <fullName evidence="1">CRISPR-associated endonuclease Cas1 3</fullName>
        <ecNumber evidence="1">3.1.-.-</ecNumber>
    </recommendedName>
</protein>
<reference key="1">
    <citation type="journal article" date="2016" name="Stand. Genomic Sci.">
        <title>Complete genome sequence of Methanospirillum hungatei type strain JF1.</title>
        <authorList>
            <person name="Gunsalus R.P."/>
            <person name="Cook L.E."/>
            <person name="Crable B."/>
            <person name="Rohlin L."/>
            <person name="McDonald E."/>
            <person name="Mouttaki H."/>
            <person name="Sieber J.R."/>
            <person name="Poweleit N."/>
            <person name="Zhou H."/>
            <person name="Lapidus A.L."/>
            <person name="Daligault H.E."/>
            <person name="Land M."/>
            <person name="Gilna P."/>
            <person name="Ivanova N."/>
            <person name="Kyrpides N."/>
            <person name="Culley D.E."/>
            <person name="McInerney M.J."/>
        </authorList>
    </citation>
    <scope>NUCLEOTIDE SEQUENCE [LARGE SCALE GENOMIC DNA]</scope>
    <source>
        <strain>ATCC 27890 / DSM 864 / NBRC 100397 / JF-1</strain>
    </source>
</reference>
<keyword id="KW-0051">Antiviral defense</keyword>
<keyword id="KW-0238">DNA-binding</keyword>
<keyword id="KW-0255">Endonuclease</keyword>
<keyword id="KW-0378">Hydrolase</keyword>
<keyword id="KW-0460">Magnesium</keyword>
<keyword id="KW-0464">Manganese</keyword>
<keyword id="KW-0479">Metal-binding</keyword>
<keyword id="KW-0540">Nuclease</keyword>
<keyword id="KW-1185">Reference proteome</keyword>
<name>CAS1C_METHJ</name>
<dbReference type="EC" id="3.1.-.-" evidence="1"/>
<dbReference type="EMBL" id="CP000254">
    <property type="protein sequence ID" value="ABD41115.1"/>
    <property type="molecule type" value="Genomic_DNA"/>
</dbReference>
<dbReference type="RefSeq" id="WP_011448384.1">
    <property type="nucleotide sequence ID" value="NC_007796.1"/>
</dbReference>
<dbReference type="SMR" id="Q2FNT7"/>
<dbReference type="STRING" id="323259.Mhun_1375"/>
<dbReference type="EnsemblBacteria" id="ABD41115">
    <property type="protein sequence ID" value="ABD41115"/>
    <property type="gene ID" value="Mhun_1375"/>
</dbReference>
<dbReference type="GeneID" id="3923370"/>
<dbReference type="KEGG" id="mhu:Mhun_1375"/>
<dbReference type="eggNOG" id="arCOG01452">
    <property type="taxonomic scope" value="Archaea"/>
</dbReference>
<dbReference type="HOGENOM" id="CLU_077904_1_0_2"/>
<dbReference type="InParanoid" id="Q2FNT7"/>
<dbReference type="OrthoDB" id="134381at2157"/>
<dbReference type="Proteomes" id="UP000001941">
    <property type="component" value="Chromosome"/>
</dbReference>
<dbReference type="GO" id="GO:0003677">
    <property type="term" value="F:DNA binding"/>
    <property type="evidence" value="ECO:0007669"/>
    <property type="project" value="UniProtKB-KW"/>
</dbReference>
<dbReference type="GO" id="GO:0004520">
    <property type="term" value="F:DNA endonuclease activity"/>
    <property type="evidence" value="ECO:0007669"/>
    <property type="project" value="InterPro"/>
</dbReference>
<dbReference type="GO" id="GO:0046872">
    <property type="term" value="F:metal ion binding"/>
    <property type="evidence" value="ECO:0007669"/>
    <property type="project" value="UniProtKB-UniRule"/>
</dbReference>
<dbReference type="GO" id="GO:0051607">
    <property type="term" value="P:defense response to virus"/>
    <property type="evidence" value="ECO:0007669"/>
    <property type="project" value="UniProtKB-UniRule"/>
</dbReference>
<dbReference type="GO" id="GO:0043571">
    <property type="term" value="P:maintenance of CRISPR repeat elements"/>
    <property type="evidence" value="ECO:0007669"/>
    <property type="project" value="UniProtKB-UniRule"/>
</dbReference>
<dbReference type="CDD" id="cd09719">
    <property type="entry name" value="Cas1_I-E"/>
    <property type="match status" value="1"/>
</dbReference>
<dbReference type="Gene3D" id="1.20.120.920">
    <property type="entry name" value="CRISPR-associated endonuclease Cas1, C-terminal domain"/>
    <property type="match status" value="1"/>
</dbReference>
<dbReference type="Gene3D" id="3.100.10.20">
    <property type="entry name" value="CRISPR-associated endonuclease Cas1, N-terminal domain"/>
    <property type="match status" value="1"/>
</dbReference>
<dbReference type="HAMAP" id="MF_01470">
    <property type="entry name" value="Cas1"/>
    <property type="match status" value="1"/>
</dbReference>
<dbReference type="InterPro" id="IPR050646">
    <property type="entry name" value="Cas1"/>
</dbReference>
<dbReference type="InterPro" id="IPR033641">
    <property type="entry name" value="Cas1_I-E"/>
</dbReference>
<dbReference type="InterPro" id="IPR002729">
    <property type="entry name" value="CRISPR-assoc_Cas1"/>
</dbReference>
<dbReference type="InterPro" id="IPR042206">
    <property type="entry name" value="CRISPR-assoc_Cas1_C"/>
</dbReference>
<dbReference type="InterPro" id="IPR019851">
    <property type="entry name" value="CRISPR-assoc_Cas1_ECOLI"/>
</dbReference>
<dbReference type="InterPro" id="IPR042211">
    <property type="entry name" value="CRISPR-assoc_Cas1_N"/>
</dbReference>
<dbReference type="NCBIfam" id="TIGR00287">
    <property type="entry name" value="cas1"/>
    <property type="match status" value="1"/>
</dbReference>
<dbReference type="NCBIfam" id="TIGR03638">
    <property type="entry name" value="cas1_ECOLI"/>
    <property type="match status" value="1"/>
</dbReference>
<dbReference type="PANTHER" id="PTHR34353:SF3">
    <property type="entry name" value="CRISPR-ASSOCIATED ENDONUCLEASE CAS1"/>
    <property type="match status" value="1"/>
</dbReference>
<dbReference type="PANTHER" id="PTHR34353">
    <property type="entry name" value="CRISPR-ASSOCIATED ENDONUCLEASE CAS1 1"/>
    <property type="match status" value="1"/>
</dbReference>
<dbReference type="Pfam" id="PF01867">
    <property type="entry name" value="Cas_Cas1"/>
    <property type="match status" value="1"/>
</dbReference>
<gene>
    <name evidence="1" type="primary">cas1-3</name>
    <name type="ordered locus">Mhun_1375</name>
</gene>